<sequence>MRILPKSGGGALCLLFVFALCSVAHSLSCDVKVVGDVEVIGYSEISKIKIPNAFSGLRVTIECKAADSKGHFVTRGSGEVDETGKFHLNIPHDIVGDDGTLKEACYAHLQSAFGNPCPAHDGLEASKIVFLSKSGQNHVLGLKKSLKFSPEVCISKFFWHMPKFPLPPPLNLPPLTFPKIKKPCPPIYKPPVVIPKKPCPPKIAHKPIYKPPVPIYKPPVPIYKPPVVIPKKPCPPKIHKPIYKPPVPIYKPPVVIPKKTFPPLHKPIYKHPVPIYKPIFKPPVVVIPKKPCPPLPKFPHFPPKYIPHPKFGKWPPFPSHP</sequence>
<accession>Q9SKP9</accession>
<accession>Q9M7P0</accession>
<name>PRP2_ARATH</name>
<organism>
    <name type="scientific">Arabidopsis thaliana</name>
    <name type="common">Mouse-ear cress</name>
    <dbReference type="NCBI Taxonomy" id="3702"/>
    <lineage>
        <taxon>Eukaryota</taxon>
        <taxon>Viridiplantae</taxon>
        <taxon>Streptophyta</taxon>
        <taxon>Embryophyta</taxon>
        <taxon>Tracheophyta</taxon>
        <taxon>Spermatophyta</taxon>
        <taxon>Magnoliopsida</taxon>
        <taxon>eudicotyledons</taxon>
        <taxon>Gunneridae</taxon>
        <taxon>Pentapetalae</taxon>
        <taxon>rosids</taxon>
        <taxon>malvids</taxon>
        <taxon>Brassicales</taxon>
        <taxon>Brassicaceae</taxon>
        <taxon>Camelineae</taxon>
        <taxon>Arabidopsis</taxon>
    </lineage>
</organism>
<keyword id="KW-0134">Cell wall</keyword>
<keyword id="KW-1185">Reference proteome</keyword>
<keyword id="KW-0677">Repeat</keyword>
<keyword id="KW-0964">Secreted</keyword>
<keyword id="KW-0732">Signal</keyword>
<proteinExistence type="evidence at transcript level"/>
<gene>
    <name type="primary">PRP2</name>
    <name type="ordered locus">At2g21140</name>
    <name type="ORF">F26H11</name>
</gene>
<comment type="subcellular location">
    <subcellularLocation>
        <location evidence="3">Secreted</location>
        <location evidence="3">Cell wall</location>
    </subcellularLocation>
</comment>
<comment type="tissue specificity">
    <text evidence="2">Mostly expressed in aerial organs, particularly in expanding leaves, stems, flowers, and siliques.</text>
</comment>
<comment type="developmental stage">
    <text evidence="2">In young seedlings, detected in the hypocotyl, cotyledons and rosette leaves,mostly in expanding leaves. At flowering time, expressed in stems, cauline leaves, sepals, and, in closed flowers only, in anthers. Later present in pedicels of developing siliques, nectaries, and along the length of maturing siliques.</text>
</comment>
<comment type="similarity">
    <text evidence="3">Belongs to the plant proline-rich protein superfamily.</text>
</comment>
<reference key="1">
    <citation type="journal article" date="1999" name="Plant Physiol.">
        <title>Characterization and expression of four proline-rich cell wall protein genes in Arabidopsis encoding two distinct subsets of multiple domain proteins.</title>
        <authorList>
            <person name="Fowler T.J."/>
            <person name="Bernhardt C."/>
            <person name="Tierney M.L."/>
        </authorList>
    </citation>
    <scope>NUCLEOTIDE SEQUENCE [GENOMIC DNA]</scope>
    <scope>TISSUE SPECIFICITY</scope>
    <scope>DEVELOPMENTAL STAGE</scope>
    <source>
        <strain>cv. Columbia</strain>
        <strain>cv. Landsberg erecta</strain>
    </source>
</reference>
<reference key="2">
    <citation type="journal article" date="1999" name="Nature">
        <title>Sequence and analysis of chromosome 2 of the plant Arabidopsis thaliana.</title>
        <authorList>
            <person name="Lin X."/>
            <person name="Kaul S."/>
            <person name="Rounsley S.D."/>
            <person name="Shea T.P."/>
            <person name="Benito M.-I."/>
            <person name="Town C.D."/>
            <person name="Fujii C.Y."/>
            <person name="Mason T.M."/>
            <person name="Bowman C.L."/>
            <person name="Barnstead M.E."/>
            <person name="Feldblyum T.V."/>
            <person name="Buell C.R."/>
            <person name="Ketchum K.A."/>
            <person name="Lee J.J."/>
            <person name="Ronning C.M."/>
            <person name="Koo H.L."/>
            <person name="Moffat K.S."/>
            <person name="Cronin L.A."/>
            <person name="Shen M."/>
            <person name="Pai G."/>
            <person name="Van Aken S."/>
            <person name="Umayam L."/>
            <person name="Tallon L.J."/>
            <person name="Gill J.E."/>
            <person name="Adams M.D."/>
            <person name="Carrera A.J."/>
            <person name="Creasy T.H."/>
            <person name="Goodman H.M."/>
            <person name="Somerville C.R."/>
            <person name="Copenhaver G.P."/>
            <person name="Preuss D."/>
            <person name="Nierman W.C."/>
            <person name="White O."/>
            <person name="Eisen J.A."/>
            <person name="Salzberg S.L."/>
            <person name="Fraser C.M."/>
            <person name="Venter J.C."/>
        </authorList>
    </citation>
    <scope>NUCLEOTIDE SEQUENCE [LARGE SCALE GENOMIC DNA]</scope>
    <source>
        <strain>cv. Columbia</strain>
    </source>
</reference>
<reference key="3">
    <citation type="journal article" date="2017" name="Plant J.">
        <title>Araport11: a complete reannotation of the Arabidopsis thaliana reference genome.</title>
        <authorList>
            <person name="Cheng C.Y."/>
            <person name="Krishnakumar V."/>
            <person name="Chan A.P."/>
            <person name="Thibaud-Nissen F."/>
            <person name="Schobel S."/>
            <person name="Town C.D."/>
        </authorList>
    </citation>
    <scope>GENOME REANNOTATION</scope>
    <source>
        <strain>cv. Columbia</strain>
    </source>
</reference>
<reference key="4">
    <citation type="journal article" date="2002" name="Science">
        <title>Functional annotation of a full-length Arabidopsis cDNA collection.</title>
        <authorList>
            <person name="Seki M."/>
            <person name="Narusaka M."/>
            <person name="Kamiya A."/>
            <person name="Ishida J."/>
            <person name="Satou M."/>
            <person name="Sakurai T."/>
            <person name="Nakajima M."/>
            <person name="Enju A."/>
            <person name="Akiyama K."/>
            <person name="Oono Y."/>
            <person name="Muramatsu M."/>
            <person name="Hayashizaki Y."/>
            <person name="Kawai J."/>
            <person name="Carninci P."/>
            <person name="Itoh M."/>
            <person name="Ishii Y."/>
            <person name="Arakawa T."/>
            <person name="Shibata K."/>
            <person name="Shinagawa A."/>
            <person name="Shinozaki K."/>
        </authorList>
    </citation>
    <scope>NUCLEOTIDE SEQUENCE [LARGE SCALE MRNA]</scope>
    <source>
        <strain>cv. Columbia</strain>
    </source>
</reference>
<reference key="5">
    <citation type="journal article" date="2003" name="Science">
        <title>Empirical analysis of transcriptional activity in the Arabidopsis genome.</title>
        <authorList>
            <person name="Yamada K."/>
            <person name="Lim J."/>
            <person name="Dale J.M."/>
            <person name="Chen H."/>
            <person name="Shinn P."/>
            <person name="Palm C.J."/>
            <person name="Southwick A.M."/>
            <person name="Wu H.C."/>
            <person name="Kim C.J."/>
            <person name="Nguyen M."/>
            <person name="Pham P.K."/>
            <person name="Cheuk R.F."/>
            <person name="Karlin-Newmann G."/>
            <person name="Liu S.X."/>
            <person name="Lam B."/>
            <person name="Sakano H."/>
            <person name="Wu T."/>
            <person name="Yu G."/>
            <person name="Miranda M."/>
            <person name="Quach H.L."/>
            <person name="Tripp M."/>
            <person name="Chang C.H."/>
            <person name="Lee J.M."/>
            <person name="Toriumi M.J."/>
            <person name="Chan M.M."/>
            <person name="Tang C.C."/>
            <person name="Onodera C.S."/>
            <person name="Deng J.M."/>
            <person name="Akiyama K."/>
            <person name="Ansari Y."/>
            <person name="Arakawa T."/>
            <person name="Banh J."/>
            <person name="Banno F."/>
            <person name="Bowser L."/>
            <person name="Brooks S.Y."/>
            <person name="Carninci P."/>
            <person name="Chao Q."/>
            <person name="Choy N."/>
            <person name="Enju A."/>
            <person name="Goldsmith A.D."/>
            <person name="Gurjal M."/>
            <person name="Hansen N.F."/>
            <person name="Hayashizaki Y."/>
            <person name="Johnson-Hopson C."/>
            <person name="Hsuan V.W."/>
            <person name="Iida K."/>
            <person name="Karnes M."/>
            <person name="Khan S."/>
            <person name="Koesema E."/>
            <person name="Ishida J."/>
            <person name="Jiang P.X."/>
            <person name="Jones T."/>
            <person name="Kawai J."/>
            <person name="Kamiya A."/>
            <person name="Meyers C."/>
            <person name="Nakajima M."/>
            <person name="Narusaka M."/>
            <person name="Seki M."/>
            <person name="Sakurai T."/>
            <person name="Satou M."/>
            <person name="Tamse R."/>
            <person name="Vaysberg M."/>
            <person name="Wallender E.K."/>
            <person name="Wong C."/>
            <person name="Yamamura Y."/>
            <person name="Yuan S."/>
            <person name="Shinozaki K."/>
            <person name="Davis R.W."/>
            <person name="Theologis A."/>
            <person name="Ecker J.R."/>
        </authorList>
    </citation>
    <scope>NUCLEOTIDE SEQUENCE [LARGE SCALE MRNA]</scope>
    <source>
        <strain>cv. Columbia</strain>
    </source>
</reference>
<feature type="signal peptide" evidence="1">
    <location>
        <begin position="1"/>
        <end position="26"/>
    </location>
</feature>
<feature type="chain" id="PRO_0000419273" description="Proline-rich protein 2">
    <location>
        <begin position="27"/>
        <end position="321"/>
    </location>
</feature>
<feature type="repeat" description="1">
    <location>
        <begin position="168"/>
        <end position="172"/>
    </location>
</feature>
<feature type="repeat" description="2">
    <location>
        <begin position="173"/>
        <end position="176"/>
    </location>
</feature>
<feature type="repeat" description="3">
    <location>
        <begin position="177"/>
        <end position="181"/>
    </location>
</feature>
<feature type="repeat" description="4">
    <location>
        <begin position="185"/>
        <end position="189"/>
    </location>
</feature>
<feature type="repeat" description="5">
    <location>
        <begin position="190"/>
        <end position="194"/>
    </location>
</feature>
<feature type="repeat" description="6">
    <location>
        <begin position="198"/>
        <end position="202"/>
    </location>
</feature>
<feature type="repeat" description="7">
    <location>
        <begin position="207"/>
        <end position="211"/>
    </location>
</feature>
<feature type="repeat" description="8">
    <location>
        <begin position="212"/>
        <end position="217"/>
    </location>
</feature>
<feature type="repeat" description="9">
    <location>
        <begin position="218"/>
        <end position="223"/>
    </location>
</feature>
<feature type="repeat" description="10">
    <location>
        <begin position="225"/>
        <end position="229"/>
    </location>
</feature>
<feature type="repeat" description="11">
    <location>
        <begin position="234"/>
        <end position="238"/>
    </location>
</feature>
<feature type="repeat" description="12">
    <location>
        <begin position="240"/>
        <end position="244"/>
    </location>
</feature>
<feature type="repeat" description="13">
    <location>
        <begin position="245"/>
        <end position="251"/>
    </location>
</feature>
<feature type="repeat" description="14">
    <location>
        <begin position="252"/>
        <end position="256"/>
    </location>
</feature>
<feature type="repeat" description="15">
    <location>
        <begin position="262"/>
        <end position="266"/>
    </location>
</feature>
<feature type="repeat" description="16">
    <location>
        <begin position="267"/>
        <end position="271"/>
    </location>
</feature>
<feature type="repeat" description="17">
    <location>
        <begin position="272"/>
        <end position="276"/>
    </location>
</feature>
<feature type="repeat" description="18">
    <location>
        <begin position="277"/>
        <end position="281"/>
    </location>
</feature>
<feature type="repeat" description="19">
    <location>
        <begin position="282"/>
        <end position="286"/>
    </location>
</feature>
<feature type="repeat" description="20">
    <location>
        <begin position="288"/>
        <end position="292"/>
    </location>
</feature>
<feature type="repeat" description="21">
    <location>
        <begin position="293"/>
        <end position="297"/>
    </location>
</feature>
<feature type="repeat" description="22">
    <location>
        <begin position="298"/>
        <end position="302"/>
    </location>
</feature>
<feature type="repeat" description="23">
    <location>
        <begin position="303"/>
        <end position="307"/>
    </location>
</feature>
<feature type="repeat" description="24">
    <location>
        <begin position="315"/>
        <end position="319"/>
    </location>
</feature>
<feature type="region of interest" description="24 X 5 AA approximate repeats">
    <location>
        <begin position="168"/>
        <end position="319"/>
    </location>
</feature>
<feature type="sequence conflict" description="In Ref. 1; AAF64549." evidence="3" ref="1">
    <original>C</original>
    <variation>R</variation>
    <location>
        <position position="29"/>
    </location>
</feature>
<feature type="sequence conflict" description="In Ref. 1; AAF64549." evidence="3" ref="1">
    <original>D</original>
    <variation>E</variation>
    <location>
        <position position="81"/>
    </location>
</feature>
<feature type="sequence conflict" description="In Ref. 1; AAF64549." evidence="3" ref="1">
    <original>Q</original>
    <variation>A</variation>
    <location>
        <position position="136"/>
    </location>
</feature>
<feature type="sequence conflict" description="In Ref. 1; AAF64549." evidence="3" ref="1">
    <original>K</original>
    <variation>Q</variation>
    <location>
        <position position="144"/>
    </location>
</feature>
<feature type="sequence conflict" description="In Ref. 1; AAF64549." evidence="3" ref="1">
    <location>
        <position position="157"/>
    </location>
</feature>
<feature type="sequence conflict" description="In Ref. 1; AAF64549." evidence="3" ref="1">
    <original>K</original>
    <variation>I</variation>
    <location>
        <position position="189"/>
    </location>
</feature>
<feature type="sequence conflict" description="In Ref. 1; AAF64549." evidence="3" ref="1">
    <original>I</original>
    <variation>V</variation>
    <location>
        <position position="203"/>
    </location>
</feature>
<dbReference type="EMBL" id="AF110986">
    <property type="protein sequence ID" value="AAF64549.1"/>
    <property type="molecule type" value="Genomic_DNA"/>
</dbReference>
<dbReference type="EMBL" id="AC006264">
    <property type="protein sequence ID" value="AAD29802.1"/>
    <property type="molecule type" value="Genomic_DNA"/>
</dbReference>
<dbReference type="EMBL" id="CP002685">
    <property type="protein sequence ID" value="AEC07127.1"/>
    <property type="molecule type" value="Genomic_DNA"/>
</dbReference>
<dbReference type="EMBL" id="AK117333">
    <property type="protein sequence ID" value="BAC42003.1"/>
    <property type="molecule type" value="mRNA"/>
</dbReference>
<dbReference type="EMBL" id="BT006235">
    <property type="protein sequence ID" value="AAP12884.1"/>
    <property type="molecule type" value="mRNA"/>
</dbReference>
<dbReference type="PIR" id="F84597">
    <property type="entry name" value="F84597"/>
</dbReference>
<dbReference type="RefSeq" id="NP_179710.1">
    <property type="nucleotide sequence ID" value="NM_127684.4"/>
</dbReference>
<dbReference type="FunCoup" id="Q9SKP9">
    <property type="interactions" value="10"/>
</dbReference>
<dbReference type="STRING" id="3702.Q9SKP9"/>
<dbReference type="GlyGen" id="Q9SKP9">
    <property type="glycosylation" value="1 site"/>
</dbReference>
<dbReference type="PaxDb" id="3702-AT2G21140.1"/>
<dbReference type="ProteomicsDB" id="226507"/>
<dbReference type="EnsemblPlants" id="AT2G21140.1">
    <property type="protein sequence ID" value="AT2G21140.1"/>
    <property type="gene ID" value="AT2G21140"/>
</dbReference>
<dbReference type="GeneID" id="816649"/>
<dbReference type="Gramene" id="AT2G21140.1">
    <property type="protein sequence ID" value="AT2G21140.1"/>
    <property type="gene ID" value="AT2G21140"/>
</dbReference>
<dbReference type="KEGG" id="ath:AT2G21140"/>
<dbReference type="Araport" id="AT2G21140"/>
<dbReference type="TAIR" id="AT2G21140">
    <property type="gene designation" value="PRP2"/>
</dbReference>
<dbReference type="eggNOG" id="ENOG502QTFH">
    <property type="taxonomic scope" value="Eukaryota"/>
</dbReference>
<dbReference type="HOGENOM" id="CLU_042219_1_0_1"/>
<dbReference type="InParanoid" id="Q9SKP9"/>
<dbReference type="OMA" id="YHPPRYE"/>
<dbReference type="PhylomeDB" id="Q9SKP9"/>
<dbReference type="PRO" id="PR:Q9SKP9"/>
<dbReference type="Proteomes" id="UP000006548">
    <property type="component" value="Chromosome 2"/>
</dbReference>
<dbReference type="ExpressionAtlas" id="Q9SKP9">
    <property type="expression patterns" value="baseline and differential"/>
</dbReference>
<dbReference type="GO" id="GO:0005576">
    <property type="term" value="C:extracellular region"/>
    <property type="evidence" value="ECO:0007669"/>
    <property type="project" value="UniProtKB-KW"/>
</dbReference>
<dbReference type="GO" id="GO:0009664">
    <property type="term" value="P:plant-type cell wall organization"/>
    <property type="evidence" value="ECO:0000250"/>
    <property type="project" value="TAIR"/>
</dbReference>
<dbReference type="PANTHER" id="PTHR33935">
    <property type="entry name" value="OS10G0148100 PROTEIN"/>
    <property type="match status" value="1"/>
</dbReference>
<dbReference type="PANTHER" id="PTHR33935:SF22">
    <property type="entry name" value="OS10G0149400 PROTEIN"/>
    <property type="match status" value="1"/>
</dbReference>
<dbReference type="Pfam" id="PF01190">
    <property type="entry name" value="Pollen_Ole_e_1"/>
    <property type="match status" value="1"/>
</dbReference>
<dbReference type="PRINTS" id="PR01217">
    <property type="entry name" value="PRICHEXTENSN"/>
</dbReference>
<protein>
    <recommendedName>
        <fullName>Proline-rich protein 2</fullName>
        <shortName>AtPRP2</shortName>
    </recommendedName>
</protein>
<evidence type="ECO:0000255" key="1"/>
<evidence type="ECO:0000269" key="2">
    <source>
    </source>
</evidence>
<evidence type="ECO:0000305" key="3"/>